<organism>
    <name type="scientific">Conus achatinus</name>
    <name type="common">Little frog cone</name>
    <dbReference type="NCBI Taxonomy" id="369967"/>
    <lineage>
        <taxon>Eukaryota</taxon>
        <taxon>Metazoa</taxon>
        <taxon>Spiralia</taxon>
        <taxon>Lophotrochozoa</taxon>
        <taxon>Mollusca</taxon>
        <taxon>Gastropoda</taxon>
        <taxon>Caenogastropoda</taxon>
        <taxon>Neogastropoda</taxon>
        <taxon>Conoidea</taxon>
        <taxon>Conidae</taxon>
        <taxon>Conus</taxon>
        <taxon>Pionoconus</taxon>
    </lineage>
</organism>
<evidence type="ECO:0000250" key="1"/>
<evidence type="ECO:0000255" key="2"/>
<evidence type="ECO:0000269" key="3">
    <source>
    </source>
</evidence>
<evidence type="ECO:0000305" key="4"/>
<comment type="function">
    <text evidence="1">Delta-conotoxins bind to site 6 of voltage-gated sodium channels (Nav) and inhibit the inactivation process.</text>
</comment>
<comment type="subcellular location">
    <subcellularLocation>
        <location>Secreted</location>
    </subcellularLocation>
</comment>
<comment type="tissue specificity">
    <text>Expressed by the venom duct.</text>
</comment>
<comment type="domain">
    <text evidence="1">The presence of a 'disulfide through disulfide knot' structurally defines this protein as a knottin.</text>
</comment>
<comment type="domain">
    <text>The cysteine framework is VI/VII (C-C-CC-C-C).</text>
</comment>
<comment type="similarity">
    <text evidence="4">Belongs to the conotoxin O1 superfamily.</text>
</comment>
<dbReference type="SMR" id="P0C8V5"/>
<dbReference type="ConoServer" id="3709">
    <property type="toxin name" value="Ac6.1 precursor"/>
</dbReference>
<dbReference type="GO" id="GO:0005576">
    <property type="term" value="C:extracellular region"/>
    <property type="evidence" value="ECO:0007669"/>
    <property type="project" value="UniProtKB-SubCell"/>
</dbReference>
<dbReference type="GO" id="GO:0008200">
    <property type="term" value="F:ion channel inhibitor activity"/>
    <property type="evidence" value="ECO:0007669"/>
    <property type="project" value="InterPro"/>
</dbReference>
<dbReference type="GO" id="GO:0017080">
    <property type="term" value="F:sodium channel regulator activity"/>
    <property type="evidence" value="ECO:0007669"/>
    <property type="project" value="UniProtKB-KW"/>
</dbReference>
<dbReference type="GO" id="GO:0090729">
    <property type="term" value="F:toxin activity"/>
    <property type="evidence" value="ECO:0007669"/>
    <property type="project" value="UniProtKB-KW"/>
</dbReference>
<dbReference type="InterPro" id="IPR004214">
    <property type="entry name" value="Conotoxin"/>
</dbReference>
<dbReference type="Pfam" id="PF02950">
    <property type="entry name" value="Conotoxin"/>
    <property type="match status" value="1"/>
</dbReference>
<proteinExistence type="evidence at protein level"/>
<protein>
    <recommendedName>
        <fullName>Delta-conotoxin-like Ac6.1</fullName>
    </recommendedName>
</protein>
<keyword id="KW-0165">Cleavage on pair of basic residues</keyword>
<keyword id="KW-0903">Direct protein sequencing</keyword>
<keyword id="KW-1015">Disulfide bond</keyword>
<keyword id="KW-0379">Hydroxylation</keyword>
<keyword id="KW-0872">Ion channel impairing toxin</keyword>
<keyword id="KW-0960">Knottin</keyword>
<keyword id="KW-0528">Neurotoxin</keyword>
<keyword id="KW-0964">Secreted</keyword>
<keyword id="KW-0732">Signal</keyword>
<keyword id="KW-0800">Toxin</keyword>
<keyword id="KW-0738">Voltage-gated sodium channel impairing toxin</keyword>
<reference key="1">
    <citation type="journal article" date="2008" name="J. Mass Spectrom.">
        <title>Probing peptide libraries from Conus achatinus using mass spectrometry and cDNA sequencing: identification of delta and omega-conotoxins.</title>
        <authorList>
            <person name="Gowd K.H."/>
            <person name="Dewan K.K."/>
            <person name="Iengar P."/>
            <person name="Krishnan K.S."/>
            <person name="Balaram P."/>
        </authorList>
    </citation>
    <scope>NUCLEOTIDE SEQUENCE [MRNA]</scope>
    <scope>PROTEIN SEQUENCE OF 61-72</scope>
    <scope>HYDROXYLATION AT PRO-57 AND PRO-65</scope>
    <scope>IDENTIFICATION BY MASS SPECTROMETRY</scope>
    <source>
        <tissue>Venom</tissue>
        <tissue>Venom duct</tissue>
    </source>
</reference>
<name>O161_CONAH</name>
<accession>P0C8V5</accession>
<sequence length="83" mass="9414">MKLTCVVIVAVLFLTAWTFVMADDSRYGLKDLFPKARHEMKNPEASKLNKRDECFSPGTFCGIKPGLCCSAWCYSFFCLTLTF</sequence>
<feature type="signal peptide" evidence="2">
    <location>
        <begin position="1"/>
        <end position="22"/>
    </location>
</feature>
<feature type="propeptide" id="PRO_0000366083" evidence="1">
    <location>
        <begin position="23"/>
        <end position="51"/>
    </location>
</feature>
<feature type="peptide" id="PRO_0000366084" description="Delta-conotoxin-like Ac6.1">
    <location>
        <begin position="52"/>
        <end position="83"/>
    </location>
</feature>
<feature type="modified residue" description="4-hydroxyproline" evidence="3">
    <location>
        <position position="57"/>
    </location>
</feature>
<feature type="modified residue" description="4-hydroxyproline" evidence="3">
    <location>
        <position position="65"/>
    </location>
</feature>
<feature type="disulfide bond" evidence="1">
    <location>
        <begin position="54"/>
        <end position="69"/>
    </location>
</feature>
<feature type="disulfide bond" evidence="1">
    <location>
        <begin position="61"/>
        <end position="73"/>
    </location>
</feature>
<feature type="disulfide bond" evidence="1">
    <location>
        <begin position="68"/>
        <end position="78"/>
    </location>
</feature>